<comment type="function">
    <text>Required for high-level post-exponential phase expression of a series of secreted proteins.</text>
</comment>
<comment type="subcellular location">
    <subcellularLocation>
        <location>Cytoplasm</location>
    </subcellularLocation>
</comment>
<keyword id="KW-0002">3D-structure</keyword>
<keyword id="KW-0010">Activator</keyword>
<keyword id="KW-0963">Cytoplasm</keyword>
<keyword id="KW-0238">DNA-binding</keyword>
<keyword id="KW-0597">Phosphoprotein</keyword>
<keyword id="KW-0804">Transcription</keyword>
<keyword id="KW-0805">Transcription regulation</keyword>
<keyword id="KW-0902">Two-component regulatory system</keyword>
<feature type="chain" id="PRO_0000081000" description="Accessory gene regulator protein A">
    <location>
        <begin position="1"/>
        <end position="238"/>
    </location>
</feature>
<feature type="domain" description="Response regulatory" evidence="2">
    <location>
        <begin position="2"/>
        <end position="125"/>
    </location>
</feature>
<feature type="domain" description="HTH LytTR-type" evidence="1">
    <location>
        <begin position="143"/>
        <end position="238"/>
    </location>
</feature>
<feature type="modified residue" description="4-aspartylphosphate" evidence="2">
    <location>
        <position position="59"/>
    </location>
</feature>
<feature type="strand" evidence="3">
    <location>
        <begin position="142"/>
        <end position="146"/>
    </location>
</feature>
<feature type="strand" evidence="3">
    <location>
        <begin position="148"/>
        <end position="155"/>
    </location>
</feature>
<feature type="helix" evidence="3">
    <location>
        <begin position="156"/>
        <end position="158"/>
    </location>
</feature>
<feature type="strand" evidence="3">
    <location>
        <begin position="159"/>
        <end position="163"/>
    </location>
</feature>
<feature type="strand" evidence="3">
    <location>
        <begin position="169"/>
        <end position="177"/>
    </location>
</feature>
<feature type="strand" evidence="3">
    <location>
        <begin position="179"/>
        <end position="182"/>
    </location>
</feature>
<feature type="helix" evidence="3">
    <location>
        <begin position="186"/>
        <end position="190"/>
    </location>
</feature>
<feature type="strand" evidence="3">
    <location>
        <begin position="196"/>
        <end position="200"/>
    </location>
</feature>
<feature type="strand" evidence="3">
    <location>
        <begin position="203"/>
        <end position="206"/>
    </location>
</feature>
<feature type="helix" evidence="3">
    <location>
        <begin position="207"/>
        <end position="209"/>
    </location>
</feature>
<feature type="strand" evidence="3">
    <location>
        <begin position="210"/>
        <end position="214"/>
    </location>
</feature>
<feature type="turn" evidence="3">
    <location>
        <begin position="215"/>
        <end position="218"/>
    </location>
</feature>
<feature type="strand" evidence="3">
    <location>
        <begin position="219"/>
        <end position="222"/>
    </location>
</feature>
<feature type="strand" evidence="3">
    <location>
        <begin position="227"/>
        <end position="229"/>
    </location>
</feature>
<feature type="turn" evidence="3">
    <location>
        <begin position="232"/>
        <end position="234"/>
    </location>
</feature>
<feature type="helix" evidence="3">
    <location>
        <begin position="235"/>
        <end position="237"/>
    </location>
</feature>
<protein>
    <recommendedName>
        <fullName>Accessory gene regulator protein A</fullName>
    </recommendedName>
</protein>
<dbReference type="EMBL" id="M21854">
    <property type="protein sequence ID" value="AAA26597.1"/>
    <property type="molecule type" value="Genomic_DNA"/>
</dbReference>
<dbReference type="EMBL" id="X52543">
    <property type="protein sequence ID" value="CAA36784.1"/>
    <property type="molecule type" value="Genomic_DNA"/>
</dbReference>
<dbReference type="EMBL" id="U85097">
    <property type="protein sequence ID" value="AAB80782.1"/>
    <property type="molecule type" value="Genomic_DNA"/>
</dbReference>
<dbReference type="EMBL" id="U85095">
    <property type="protein sequence ID" value="AAB81231.1"/>
    <property type="molecule type" value="Genomic_DNA"/>
</dbReference>
<dbReference type="EMBL" id="U85096">
    <property type="protein sequence ID" value="AAB80778.1"/>
    <property type="molecule type" value="Genomic_DNA"/>
</dbReference>
<dbReference type="PIR" id="A32357">
    <property type="entry name" value="A32357"/>
</dbReference>
<dbReference type="RefSeq" id="WP_000688492.1">
    <property type="nucleotide sequence ID" value="NZ_WYDB01000007.1"/>
</dbReference>
<dbReference type="PDB" id="3BS1">
    <property type="method" value="X-ray"/>
    <property type="resolution" value="1.60 A"/>
    <property type="chains" value="A=137-238"/>
</dbReference>
<dbReference type="PDB" id="4G4K">
    <property type="method" value="X-ray"/>
    <property type="resolution" value="1.52 A"/>
    <property type="chains" value="A/B=137-238"/>
</dbReference>
<dbReference type="PDBsum" id="3BS1"/>
<dbReference type="PDBsum" id="4G4K"/>
<dbReference type="BMRB" id="P0A0I7"/>
<dbReference type="SMR" id="P0A0I7"/>
<dbReference type="IntAct" id="P0A0I7">
    <property type="interactions" value="1"/>
</dbReference>
<dbReference type="MINT" id="P0A0I7"/>
<dbReference type="BindingDB" id="P0A0I7"/>
<dbReference type="ChEMBL" id="CHEMBL1681616"/>
<dbReference type="OMA" id="SVYICED"/>
<dbReference type="EvolutionaryTrace" id="P0A0I7"/>
<dbReference type="PHI-base" id="PHI:10372"/>
<dbReference type="PHI-base" id="PHI:6428"/>
<dbReference type="PHI-base" id="PHI:9441"/>
<dbReference type="PRO" id="PR:P0A0I7"/>
<dbReference type="GO" id="GO:0005737">
    <property type="term" value="C:cytoplasm"/>
    <property type="evidence" value="ECO:0007669"/>
    <property type="project" value="UniProtKB-SubCell"/>
</dbReference>
<dbReference type="GO" id="GO:0003677">
    <property type="term" value="F:DNA binding"/>
    <property type="evidence" value="ECO:0007669"/>
    <property type="project" value="UniProtKB-KW"/>
</dbReference>
<dbReference type="GO" id="GO:0000156">
    <property type="term" value="F:phosphorelay response regulator activity"/>
    <property type="evidence" value="ECO:0007669"/>
    <property type="project" value="InterPro"/>
</dbReference>
<dbReference type="CDD" id="cd17533">
    <property type="entry name" value="REC_LytTR_AgrA-like"/>
    <property type="match status" value="1"/>
</dbReference>
<dbReference type="FunFam" id="2.40.50.1020:FF:000005">
    <property type="entry name" value="Accessory gene regulator A"/>
    <property type="match status" value="1"/>
</dbReference>
<dbReference type="Gene3D" id="3.40.50.2300">
    <property type="match status" value="1"/>
</dbReference>
<dbReference type="Gene3D" id="2.40.50.1020">
    <property type="entry name" value="LytTr DNA-binding domain"/>
    <property type="match status" value="1"/>
</dbReference>
<dbReference type="InterPro" id="IPR011006">
    <property type="entry name" value="CheY-like_superfamily"/>
</dbReference>
<dbReference type="InterPro" id="IPR046947">
    <property type="entry name" value="LytR-like"/>
</dbReference>
<dbReference type="InterPro" id="IPR007492">
    <property type="entry name" value="LytTR_DNA-bd_dom"/>
</dbReference>
<dbReference type="InterPro" id="IPR001789">
    <property type="entry name" value="Sig_transdc_resp-reg_receiver"/>
</dbReference>
<dbReference type="NCBIfam" id="NF046049">
    <property type="entry name" value="quorum_RR_AgrA"/>
    <property type="match status" value="1"/>
</dbReference>
<dbReference type="PANTHER" id="PTHR37299:SF3">
    <property type="entry name" value="STAGE 0 SPORULATION PROTEIN A HOMOLOG"/>
    <property type="match status" value="1"/>
</dbReference>
<dbReference type="PANTHER" id="PTHR37299">
    <property type="entry name" value="TRANSCRIPTIONAL REGULATOR-RELATED"/>
    <property type="match status" value="1"/>
</dbReference>
<dbReference type="Pfam" id="PF04397">
    <property type="entry name" value="LytTR"/>
    <property type="match status" value="1"/>
</dbReference>
<dbReference type="Pfam" id="PF00072">
    <property type="entry name" value="Response_reg"/>
    <property type="match status" value="1"/>
</dbReference>
<dbReference type="SMART" id="SM00850">
    <property type="entry name" value="LytTR"/>
    <property type="match status" value="1"/>
</dbReference>
<dbReference type="SMART" id="SM00448">
    <property type="entry name" value="REC"/>
    <property type="match status" value="1"/>
</dbReference>
<dbReference type="SUPFAM" id="SSF52172">
    <property type="entry name" value="CheY-like"/>
    <property type="match status" value="1"/>
</dbReference>
<dbReference type="PROSITE" id="PS50930">
    <property type="entry name" value="HTH_LYTTR"/>
    <property type="match status" value="1"/>
</dbReference>
<dbReference type="PROSITE" id="PS50110">
    <property type="entry name" value="RESPONSE_REGULATORY"/>
    <property type="match status" value="1"/>
</dbReference>
<name>AGRA_STAAU</name>
<gene>
    <name type="primary">agrA</name>
    <name type="synonym">agr</name>
</gene>
<sequence>MKIFICEDDPKQRENMVTIIKNYIMIEEKPMEIALATDNPYEVLEQAKNMNDIGCYFLDIQLSTDINGIKLGSEIRKHDPVGNIIFVTSHSELTYLTFVYKVAAMDFIFKDDPAELRTRIIDCLETAHTRLQLLSKDNSVETIELKRGSNSVYVQYDDIMFFESSTKSHRLIAHLDNRQIEFYGNLKELSQLDDRFFRCHNSFVVNRHNIESIDSKERIVYFKNKEHCYASVRNVKKI</sequence>
<reference key="1">
    <citation type="journal article" date="1988" name="J. Bacteriol.">
        <title>Cloning, characterization, and sequencing of an accessory gene regulator (agr) in Staphylococcus aureus.</title>
        <authorList>
            <person name="Peng H.-L."/>
            <person name="Novick R.P."/>
            <person name="Kreiswirth B."/>
            <person name="Kornblum J."/>
            <person name="Schlievert P."/>
        </authorList>
    </citation>
    <scope>NUCLEOTIDE SEQUENCE [GENOMIC DNA]</scope>
</reference>
<reference key="2">
    <citation type="journal article" date="1995" name="Mol. Gen. Genet.">
        <title>The agr P2 operon: an autocatalytic sensory transduction system in Staphylococcus aureus.</title>
        <authorList>
            <person name="Novick R.P."/>
            <person name="Projan S.J."/>
            <person name="Kornblum J."/>
            <person name="Ross H.F."/>
            <person name="Ji G."/>
            <person name="Kreiswirth B."/>
            <person name="Vandenesch F."/>
            <person name="Moghazeh S."/>
        </authorList>
    </citation>
    <scope>NUCLEOTIDE SEQUENCE [GENOMIC DNA]</scope>
    <source>
        <strain>Isolate GAL</strain>
    </source>
</reference>
<reference key="3">
    <citation type="submission" date="1997-04" db="EMBL/GenBank/DDBJ databases">
        <authorList>
            <person name="McNamara P.J."/>
            <person name="Iandolo J.J."/>
        </authorList>
    </citation>
    <scope>NUCLEOTIDE SEQUENCE [GENOMIC DNA] OF 1-114</scope>
    <source>
        <strain>KSI54</strain>
        <strain>KSI9051</strain>
        <strain>RN4282</strain>
    </source>
</reference>
<evidence type="ECO:0000255" key="1">
    <source>
        <dbReference type="PROSITE-ProRule" id="PRU00112"/>
    </source>
</evidence>
<evidence type="ECO:0000255" key="2">
    <source>
        <dbReference type="PROSITE-ProRule" id="PRU00169"/>
    </source>
</evidence>
<evidence type="ECO:0007829" key="3">
    <source>
        <dbReference type="PDB" id="4G4K"/>
    </source>
</evidence>
<proteinExistence type="evidence at protein level"/>
<accession>P0A0I7</accession>
<accession>P13131</accession>
<organism>
    <name type="scientific">Staphylococcus aureus</name>
    <dbReference type="NCBI Taxonomy" id="1280"/>
    <lineage>
        <taxon>Bacteria</taxon>
        <taxon>Bacillati</taxon>
        <taxon>Bacillota</taxon>
        <taxon>Bacilli</taxon>
        <taxon>Bacillales</taxon>
        <taxon>Staphylococcaceae</taxon>
        <taxon>Staphylococcus</taxon>
    </lineage>
</organism>